<sequence length="144" mass="16931">MAFNFTAFTYIVALIGDAFLIFFAIFHVIAFDELKTDYKNPIDQCNSLNPLVLPEYLLHIFLNLLFLFCGEWFSLCINIPLIAYHIWRYKNRPVMSGPGLYDPTTVLKTDTLYRNMREGWIKLAVYLISFFYYIYGMVYSLIST</sequence>
<accession>P49858</accession>
<accession>A4V0S2</accession>
<accession>Q53XF2</accession>
<accession>Q9V423</accession>
<name>CNI_DROME</name>
<dbReference type="EMBL" id="U28069">
    <property type="protein sequence ID" value="AAA86527.1"/>
    <property type="molecule type" value="mRNA"/>
</dbReference>
<dbReference type="EMBL" id="AE014134">
    <property type="protein sequence ID" value="AAF53521.1"/>
    <property type="molecule type" value="Genomic_DNA"/>
</dbReference>
<dbReference type="EMBL" id="AE014134">
    <property type="protein sequence ID" value="AAF53522.1"/>
    <property type="molecule type" value="Genomic_DNA"/>
</dbReference>
<dbReference type="EMBL" id="BT011529">
    <property type="protein sequence ID" value="AAS15665.1"/>
    <property type="molecule type" value="mRNA"/>
</dbReference>
<dbReference type="PIR" id="A56724">
    <property type="entry name" value="A56724"/>
</dbReference>
<dbReference type="RefSeq" id="NP_001260495.1">
    <property type="nucleotide sequence ID" value="NM_001273566.1"/>
</dbReference>
<dbReference type="RefSeq" id="NP_477068.1">
    <property type="nucleotide sequence ID" value="NM_057720.3"/>
</dbReference>
<dbReference type="RefSeq" id="NP_723959.1">
    <property type="nucleotide sequence ID" value="NM_165151.2"/>
</dbReference>
<dbReference type="SMR" id="P49858"/>
<dbReference type="BioGRID" id="60978">
    <property type="interactions" value="23"/>
</dbReference>
<dbReference type="FunCoup" id="P49858">
    <property type="interactions" value="1384"/>
</dbReference>
<dbReference type="IntAct" id="P49858">
    <property type="interactions" value="19"/>
</dbReference>
<dbReference type="STRING" id="7227.FBpp0308005"/>
<dbReference type="TCDB" id="8.A.61.1.6">
    <property type="family name" value="the endoplasmic reticulum-derived vesicle protein, erv14 (erv14) family"/>
</dbReference>
<dbReference type="PaxDb" id="7227-FBpp0080405"/>
<dbReference type="DNASU" id="34967"/>
<dbReference type="EnsemblMetazoa" id="FBtr0080848">
    <property type="protein sequence ID" value="FBpp0080405"/>
    <property type="gene ID" value="FBgn0000339"/>
</dbReference>
<dbReference type="EnsemblMetazoa" id="FBtr0080849">
    <property type="protein sequence ID" value="FBpp0080406"/>
    <property type="gene ID" value="FBgn0000339"/>
</dbReference>
<dbReference type="EnsemblMetazoa" id="FBtr0337082">
    <property type="protein sequence ID" value="FBpp0308005"/>
    <property type="gene ID" value="FBgn0000339"/>
</dbReference>
<dbReference type="GeneID" id="34967"/>
<dbReference type="KEGG" id="dme:Dmel_CG5855"/>
<dbReference type="UCSC" id="CG5855-RA">
    <property type="organism name" value="d. melanogaster"/>
</dbReference>
<dbReference type="UCSC" id="CG5855-RB">
    <property type="organism name" value="d. melanogaster"/>
</dbReference>
<dbReference type="AGR" id="FB:FBgn0000339"/>
<dbReference type="CTD" id="34967"/>
<dbReference type="FlyBase" id="FBgn0000339">
    <property type="gene designation" value="cni"/>
</dbReference>
<dbReference type="VEuPathDB" id="VectorBase:FBgn0000339"/>
<dbReference type="eggNOG" id="KOG2729">
    <property type="taxonomic scope" value="Eukaryota"/>
</dbReference>
<dbReference type="GeneTree" id="ENSGT00950000182834"/>
<dbReference type="HOGENOM" id="CLU_112942_1_0_1"/>
<dbReference type="InParanoid" id="P49858"/>
<dbReference type="OMA" id="FAVFHVI"/>
<dbReference type="OrthoDB" id="434393at2759"/>
<dbReference type="PhylomeDB" id="P49858"/>
<dbReference type="Reactome" id="R-DME-204005">
    <property type="pathway name" value="COPII-mediated vesicle transport"/>
</dbReference>
<dbReference type="Reactome" id="R-DME-5694530">
    <property type="pathway name" value="Cargo concentration in the ER"/>
</dbReference>
<dbReference type="BioGRID-ORCS" id="34967">
    <property type="hits" value="0 hits in 3 CRISPR screens"/>
</dbReference>
<dbReference type="GenomeRNAi" id="34967"/>
<dbReference type="PRO" id="PR:P49858"/>
<dbReference type="Proteomes" id="UP000000803">
    <property type="component" value="Chromosome 2L"/>
</dbReference>
<dbReference type="Bgee" id="FBgn0000339">
    <property type="expression patterns" value="Expressed in saliva-secreting gland and 194 other cell types or tissues"/>
</dbReference>
<dbReference type="ExpressionAtlas" id="P49858">
    <property type="expression patterns" value="baseline and differential"/>
</dbReference>
<dbReference type="GO" id="GO:0030134">
    <property type="term" value="C:COPII-coated ER to Golgi transport vesicle"/>
    <property type="evidence" value="ECO:0000318"/>
    <property type="project" value="GO_Central"/>
</dbReference>
<dbReference type="GO" id="GO:0005789">
    <property type="term" value="C:endoplasmic reticulum membrane"/>
    <property type="evidence" value="ECO:0000314"/>
    <property type="project" value="UniProtKB"/>
</dbReference>
<dbReference type="GO" id="GO:0005102">
    <property type="term" value="F:signaling receptor binding"/>
    <property type="evidence" value="ECO:0000318"/>
    <property type="project" value="GO_Central"/>
</dbReference>
<dbReference type="GO" id="GO:0009952">
    <property type="term" value="P:anterior/posterior pattern specification"/>
    <property type="evidence" value="ECO:0000315"/>
    <property type="project" value="FlyBase"/>
</dbReference>
<dbReference type="GO" id="GO:0007350">
    <property type="term" value="P:blastoderm segmentation"/>
    <property type="evidence" value="ECO:0000315"/>
    <property type="project" value="FlyBase"/>
</dbReference>
<dbReference type="GO" id="GO:0046843">
    <property type="term" value="P:dorsal appendage formation"/>
    <property type="evidence" value="ECO:0000315"/>
    <property type="project" value="FlyBase"/>
</dbReference>
<dbReference type="GO" id="GO:0006888">
    <property type="term" value="P:endoplasmic reticulum to Golgi vesicle-mediated transport"/>
    <property type="evidence" value="ECO:0000315"/>
    <property type="project" value="UniProtKB"/>
</dbReference>
<dbReference type="GO" id="GO:0007310">
    <property type="term" value="P:oocyte dorsal/ventral axis specification"/>
    <property type="evidence" value="ECO:0000315"/>
    <property type="project" value="FlyBase"/>
</dbReference>
<dbReference type="GO" id="GO:0015031">
    <property type="term" value="P:protein transport"/>
    <property type="evidence" value="ECO:0007669"/>
    <property type="project" value="UniProtKB-KW"/>
</dbReference>
<dbReference type="GO" id="GO:0016192">
    <property type="term" value="P:vesicle-mediated transport"/>
    <property type="evidence" value="ECO:0000315"/>
    <property type="project" value="FlyBase"/>
</dbReference>
<dbReference type="InterPro" id="IPR003377">
    <property type="entry name" value="Cornichon"/>
</dbReference>
<dbReference type="InterPro" id="IPR033466">
    <property type="entry name" value="Cornichon_conserved"/>
</dbReference>
<dbReference type="PANTHER" id="PTHR12290">
    <property type="entry name" value="CORNICHON-RELATED"/>
    <property type="match status" value="1"/>
</dbReference>
<dbReference type="Pfam" id="PF03311">
    <property type="entry name" value="Cornichon"/>
    <property type="match status" value="1"/>
</dbReference>
<dbReference type="SMART" id="SM01398">
    <property type="entry name" value="Cornichon"/>
    <property type="match status" value="1"/>
</dbReference>
<dbReference type="PROSITE" id="PS01340">
    <property type="entry name" value="CORNICHON"/>
    <property type="match status" value="1"/>
</dbReference>
<evidence type="ECO:0000255" key="1"/>
<evidence type="ECO:0000269" key="2">
    <source>
    </source>
</evidence>
<evidence type="ECO:0000269" key="3">
    <source>
    </source>
</evidence>
<evidence type="ECO:0000305" key="4"/>
<gene>
    <name type="primary">cni</name>
    <name type="ORF">CG5855</name>
</gene>
<comment type="function">
    <text evidence="2 3">Acts as a cargo receptor necessary for the transportation of gurken (grk) to a transitional endoplasmic reticulum (tER) site and promotes its incorporation into coat protein complex II (COPII) vesicles. Associated with gurken, produces a signal received by torpedo resulting in a signaling pathway that first establishes posterior follicle cell fates and normal localization of the anterior and posterior determinants, later they act in a signaling event inducing dorsal follicle cell fates and regulating the dorsal-ventral pattern of egg and embryo.</text>
</comment>
<comment type="subunit">
    <text evidence="2">Interacts with grk.</text>
</comment>
<comment type="subcellular location">
    <subcellularLocation>
        <location evidence="2">Endoplasmic reticulum membrane</location>
        <topology evidence="2">Multi-pass membrane protein</topology>
    </subcellularLocation>
</comment>
<comment type="tissue specificity">
    <text evidence="2">Expressed in male and female somatic tissues.</text>
</comment>
<comment type="developmental stage">
    <text evidence="2 3">Detectable in the germline from germarium stages onwards and becomes enriched within the oocyte during early and middle stages of oogenesis. In early stages, it is present in the nurse cell oocyte cluster. It is highly expressed in stage 1-6 egg chambers, expression ceases during stage 7 and cannot be detected in stages 8 and 9. During stage 10, it is reexpressed in the nurse cells.</text>
</comment>
<comment type="similarity">
    <text evidence="4">Belongs to the cornichon family.</text>
</comment>
<proteinExistence type="evidence at protein level"/>
<reference key="1">
    <citation type="journal article" date="1995" name="Cell">
        <title>Cornichon and the EGF receptor signaling process are necessary for both anterior-posterior and dorsal-ventral pattern formation in Drosophila.</title>
        <authorList>
            <person name="Roth S."/>
            <person name="Neuman-Silberberg F.S."/>
            <person name="Barcelo G."/>
            <person name="Schuepbach T."/>
        </authorList>
    </citation>
    <scope>NUCLEOTIDE SEQUENCE [MRNA]</scope>
    <scope>FUNCTION</scope>
    <scope>DEVELOPMENTAL STAGE</scope>
    <source>
        <tissue>Ovary</tissue>
    </source>
</reference>
<reference key="2">
    <citation type="journal article" date="1999" name="Genetics">
        <title>An exploration of the sequence of a 2.9-Mb region of the genome of Drosophila melanogaster: the Adh region.</title>
        <authorList>
            <person name="Ashburner M."/>
            <person name="Misra S."/>
            <person name="Roote J."/>
            <person name="Lewis S.E."/>
            <person name="Blazej R.G."/>
            <person name="Davis T."/>
            <person name="Doyle C."/>
            <person name="Galle R.F."/>
            <person name="George R.A."/>
            <person name="Harris N.L."/>
            <person name="Hartzell G."/>
            <person name="Harvey D.A."/>
            <person name="Hong L."/>
            <person name="Houston K.A."/>
            <person name="Hoskins R.A."/>
            <person name="Johnson G."/>
            <person name="Martin C."/>
            <person name="Moshrefi A.R."/>
            <person name="Palazzolo M."/>
            <person name="Reese M.G."/>
            <person name="Spradling A.C."/>
            <person name="Tsang G."/>
            <person name="Wan K.H."/>
            <person name="Whitelaw K."/>
            <person name="Celniker S.E."/>
            <person name="Rubin G.M."/>
        </authorList>
    </citation>
    <scope>NUCLEOTIDE SEQUENCE [LARGE SCALE GENOMIC DNA]</scope>
    <source>
        <strain>Berkeley</strain>
    </source>
</reference>
<reference key="3">
    <citation type="journal article" date="2000" name="Science">
        <title>The genome sequence of Drosophila melanogaster.</title>
        <authorList>
            <person name="Adams M.D."/>
            <person name="Celniker S.E."/>
            <person name="Holt R.A."/>
            <person name="Evans C.A."/>
            <person name="Gocayne J.D."/>
            <person name="Amanatides P.G."/>
            <person name="Scherer S.E."/>
            <person name="Li P.W."/>
            <person name="Hoskins R.A."/>
            <person name="Galle R.F."/>
            <person name="George R.A."/>
            <person name="Lewis S.E."/>
            <person name="Richards S."/>
            <person name="Ashburner M."/>
            <person name="Henderson S.N."/>
            <person name="Sutton G.G."/>
            <person name="Wortman J.R."/>
            <person name="Yandell M.D."/>
            <person name="Zhang Q."/>
            <person name="Chen L.X."/>
            <person name="Brandon R.C."/>
            <person name="Rogers Y.-H.C."/>
            <person name="Blazej R.G."/>
            <person name="Champe M."/>
            <person name="Pfeiffer B.D."/>
            <person name="Wan K.H."/>
            <person name="Doyle C."/>
            <person name="Baxter E.G."/>
            <person name="Helt G."/>
            <person name="Nelson C.R."/>
            <person name="Miklos G.L.G."/>
            <person name="Abril J.F."/>
            <person name="Agbayani A."/>
            <person name="An H.-J."/>
            <person name="Andrews-Pfannkoch C."/>
            <person name="Baldwin D."/>
            <person name="Ballew R.M."/>
            <person name="Basu A."/>
            <person name="Baxendale J."/>
            <person name="Bayraktaroglu L."/>
            <person name="Beasley E.M."/>
            <person name="Beeson K.Y."/>
            <person name="Benos P.V."/>
            <person name="Berman B.P."/>
            <person name="Bhandari D."/>
            <person name="Bolshakov S."/>
            <person name="Borkova D."/>
            <person name="Botchan M.R."/>
            <person name="Bouck J."/>
            <person name="Brokstein P."/>
            <person name="Brottier P."/>
            <person name="Burtis K.C."/>
            <person name="Busam D.A."/>
            <person name="Butler H."/>
            <person name="Cadieu E."/>
            <person name="Center A."/>
            <person name="Chandra I."/>
            <person name="Cherry J.M."/>
            <person name="Cawley S."/>
            <person name="Dahlke C."/>
            <person name="Davenport L.B."/>
            <person name="Davies P."/>
            <person name="de Pablos B."/>
            <person name="Delcher A."/>
            <person name="Deng Z."/>
            <person name="Mays A.D."/>
            <person name="Dew I."/>
            <person name="Dietz S.M."/>
            <person name="Dodson K."/>
            <person name="Doup L.E."/>
            <person name="Downes M."/>
            <person name="Dugan-Rocha S."/>
            <person name="Dunkov B.C."/>
            <person name="Dunn P."/>
            <person name="Durbin K.J."/>
            <person name="Evangelista C.C."/>
            <person name="Ferraz C."/>
            <person name="Ferriera S."/>
            <person name="Fleischmann W."/>
            <person name="Fosler C."/>
            <person name="Gabrielian A.E."/>
            <person name="Garg N.S."/>
            <person name="Gelbart W.M."/>
            <person name="Glasser K."/>
            <person name="Glodek A."/>
            <person name="Gong F."/>
            <person name="Gorrell J.H."/>
            <person name="Gu Z."/>
            <person name="Guan P."/>
            <person name="Harris M."/>
            <person name="Harris N.L."/>
            <person name="Harvey D.A."/>
            <person name="Heiman T.J."/>
            <person name="Hernandez J.R."/>
            <person name="Houck J."/>
            <person name="Hostin D."/>
            <person name="Houston K.A."/>
            <person name="Howland T.J."/>
            <person name="Wei M.-H."/>
            <person name="Ibegwam C."/>
            <person name="Jalali M."/>
            <person name="Kalush F."/>
            <person name="Karpen G.H."/>
            <person name="Ke Z."/>
            <person name="Kennison J.A."/>
            <person name="Ketchum K.A."/>
            <person name="Kimmel B.E."/>
            <person name="Kodira C.D."/>
            <person name="Kraft C.L."/>
            <person name="Kravitz S."/>
            <person name="Kulp D."/>
            <person name="Lai Z."/>
            <person name="Lasko P."/>
            <person name="Lei Y."/>
            <person name="Levitsky A.A."/>
            <person name="Li J.H."/>
            <person name="Li Z."/>
            <person name="Liang Y."/>
            <person name="Lin X."/>
            <person name="Liu X."/>
            <person name="Mattei B."/>
            <person name="McIntosh T.C."/>
            <person name="McLeod M.P."/>
            <person name="McPherson D."/>
            <person name="Merkulov G."/>
            <person name="Milshina N.V."/>
            <person name="Mobarry C."/>
            <person name="Morris J."/>
            <person name="Moshrefi A."/>
            <person name="Mount S.M."/>
            <person name="Moy M."/>
            <person name="Murphy B."/>
            <person name="Murphy L."/>
            <person name="Muzny D.M."/>
            <person name="Nelson D.L."/>
            <person name="Nelson D.R."/>
            <person name="Nelson K.A."/>
            <person name="Nixon K."/>
            <person name="Nusskern D.R."/>
            <person name="Pacleb J.M."/>
            <person name="Palazzolo M."/>
            <person name="Pittman G.S."/>
            <person name="Pan S."/>
            <person name="Pollard J."/>
            <person name="Puri V."/>
            <person name="Reese M.G."/>
            <person name="Reinert K."/>
            <person name="Remington K."/>
            <person name="Saunders R.D.C."/>
            <person name="Scheeler F."/>
            <person name="Shen H."/>
            <person name="Shue B.C."/>
            <person name="Siden-Kiamos I."/>
            <person name="Simpson M."/>
            <person name="Skupski M.P."/>
            <person name="Smith T.J."/>
            <person name="Spier E."/>
            <person name="Spradling A.C."/>
            <person name="Stapleton M."/>
            <person name="Strong R."/>
            <person name="Sun E."/>
            <person name="Svirskas R."/>
            <person name="Tector C."/>
            <person name="Turner R."/>
            <person name="Venter E."/>
            <person name="Wang A.H."/>
            <person name="Wang X."/>
            <person name="Wang Z.-Y."/>
            <person name="Wassarman D.A."/>
            <person name="Weinstock G.M."/>
            <person name="Weissenbach J."/>
            <person name="Williams S.M."/>
            <person name="Woodage T."/>
            <person name="Worley K.C."/>
            <person name="Wu D."/>
            <person name="Yang S."/>
            <person name="Yao Q.A."/>
            <person name="Ye J."/>
            <person name="Yeh R.-F."/>
            <person name="Zaveri J.S."/>
            <person name="Zhan M."/>
            <person name="Zhang G."/>
            <person name="Zhao Q."/>
            <person name="Zheng L."/>
            <person name="Zheng X.H."/>
            <person name="Zhong F.N."/>
            <person name="Zhong W."/>
            <person name="Zhou X."/>
            <person name="Zhu S.C."/>
            <person name="Zhu X."/>
            <person name="Smith H.O."/>
            <person name="Gibbs R.A."/>
            <person name="Myers E.W."/>
            <person name="Rubin G.M."/>
            <person name="Venter J.C."/>
        </authorList>
    </citation>
    <scope>NUCLEOTIDE SEQUENCE [LARGE SCALE GENOMIC DNA]</scope>
    <source>
        <strain>Berkeley</strain>
    </source>
</reference>
<reference key="4">
    <citation type="journal article" date="2002" name="Genome Biol.">
        <title>Annotation of the Drosophila melanogaster euchromatic genome: a systematic review.</title>
        <authorList>
            <person name="Misra S."/>
            <person name="Crosby M.A."/>
            <person name="Mungall C.J."/>
            <person name="Matthews B.B."/>
            <person name="Campbell K.S."/>
            <person name="Hradecky P."/>
            <person name="Huang Y."/>
            <person name="Kaminker J.S."/>
            <person name="Millburn G.H."/>
            <person name="Prochnik S.E."/>
            <person name="Smith C.D."/>
            <person name="Tupy J.L."/>
            <person name="Whitfield E.J."/>
            <person name="Bayraktaroglu L."/>
            <person name="Berman B.P."/>
            <person name="Bettencourt B.R."/>
            <person name="Celniker S.E."/>
            <person name="de Grey A.D.N.J."/>
            <person name="Drysdale R.A."/>
            <person name="Harris N.L."/>
            <person name="Richter J."/>
            <person name="Russo S."/>
            <person name="Schroeder A.J."/>
            <person name="Shu S.Q."/>
            <person name="Stapleton M."/>
            <person name="Yamada C."/>
            <person name="Ashburner M."/>
            <person name="Gelbart W.M."/>
            <person name="Rubin G.M."/>
            <person name="Lewis S.E."/>
        </authorList>
    </citation>
    <scope>GENOME REANNOTATION</scope>
    <source>
        <strain>Berkeley</strain>
    </source>
</reference>
<reference key="5">
    <citation type="submission" date="2004-02" db="EMBL/GenBank/DDBJ databases">
        <authorList>
            <person name="Stapleton M."/>
            <person name="Carlson J.W."/>
            <person name="Chavez C."/>
            <person name="Frise E."/>
            <person name="George R.A."/>
            <person name="Pacleb J.M."/>
            <person name="Park S."/>
            <person name="Wan K.H."/>
            <person name="Yu C."/>
            <person name="Rubin G.M."/>
            <person name="Celniker S.E."/>
        </authorList>
    </citation>
    <scope>NUCLEOTIDE SEQUENCE [LARGE SCALE MRNA]</scope>
    <source>
        <strain>Berkeley</strain>
        <tissue>Embryo</tissue>
    </source>
</reference>
<reference key="6">
    <citation type="journal article" date="2006" name="Development">
        <title>Drosophila Cornichon acts as cargo receptor for ER export of the TGFalpha-like growth factor Gurken.</title>
        <authorList>
            <person name="Boekel C."/>
            <person name="Dass S."/>
            <person name="Wilsch-Braeuninger M."/>
            <person name="Roth S."/>
        </authorList>
    </citation>
    <scope>FUNCTION</scope>
    <scope>SUBCELLULAR LOCATION</scope>
    <scope>TISSUE SPECIFICITY</scope>
    <scope>DEVELOPMENTAL STAGE</scope>
    <scope>INTERACTION WITH GRK</scope>
</reference>
<organism>
    <name type="scientific">Drosophila melanogaster</name>
    <name type="common">Fruit fly</name>
    <dbReference type="NCBI Taxonomy" id="7227"/>
    <lineage>
        <taxon>Eukaryota</taxon>
        <taxon>Metazoa</taxon>
        <taxon>Ecdysozoa</taxon>
        <taxon>Arthropoda</taxon>
        <taxon>Hexapoda</taxon>
        <taxon>Insecta</taxon>
        <taxon>Pterygota</taxon>
        <taxon>Neoptera</taxon>
        <taxon>Endopterygota</taxon>
        <taxon>Diptera</taxon>
        <taxon>Brachycera</taxon>
        <taxon>Muscomorpha</taxon>
        <taxon>Ephydroidea</taxon>
        <taxon>Drosophilidae</taxon>
        <taxon>Drosophila</taxon>
        <taxon>Sophophora</taxon>
    </lineage>
</organism>
<protein>
    <recommendedName>
        <fullName>Protein cornichon</fullName>
    </recommendedName>
</protein>
<feature type="chain" id="PRO_0000122234" description="Protein cornichon">
    <location>
        <begin position="1"/>
        <end position="144"/>
    </location>
</feature>
<feature type="topological domain" description="Lumenal" evidence="1">
    <location>
        <begin position="1"/>
        <end position="10"/>
    </location>
</feature>
<feature type="transmembrane region" description="Helical" evidence="1">
    <location>
        <begin position="11"/>
        <end position="31"/>
    </location>
</feature>
<feature type="topological domain" description="Cytoplasmic" evidence="1">
    <location>
        <begin position="32"/>
        <end position="56"/>
    </location>
</feature>
<feature type="transmembrane region" description="Helical" evidence="1">
    <location>
        <begin position="57"/>
        <end position="77"/>
    </location>
</feature>
<feature type="topological domain" description="Lumenal" evidence="1">
    <location>
        <begin position="78"/>
        <end position="122"/>
    </location>
</feature>
<feature type="transmembrane region" description="Helical" evidence="1">
    <location>
        <begin position="123"/>
        <end position="143"/>
    </location>
</feature>
<feature type="topological domain" description="Cytoplasmic" evidence="1">
    <location>
        <position position="144"/>
    </location>
</feature>
<feature type="region of interest" description="Interaction with grk">
    <location>
        <begin position="1"/>
        <end position="57"/>
    </location>
</feature>
<keyword id="KW-0217">Developmental protein</keyword>
<keyword id="KW-0256">Endoplasmic reticulum</keyword>
<keyword id="KW-0931">ER-Golgi transport</keyword>
<keyword id="KW-0472">Membrane</keyword>
<keyword id="KW-0653">Protein transport</keyword>
<keyword id="KW-0675">Receptor</keyword>
<keyword id="KW-1185">Reference proteome</keyword>
<keyword id="KW-0812">Transmembrane</keyword>
<keyword id="KW-1133">Transmembrane helix</keyword>
<keyword id="KW-0813">Transport</keyword>